<evidence type="ECO:0000255" key="1">
    <source>
        <dbReference type="HAMAP-Rule" id="MF_01023"/>
    </source>
</evidence>
<gene>
    <name evidence="1" type="primary">hisC</name>
    <name type="ordered locus">SAR0777</name>
</gene>
<dbReference type="EC" id="2.6.1.9" evidence="1"/>
<dbReference type="EMBL" id="BX571856">
    <property type="protein sequence ID" value="CAG39787.1"/>
    <property type="molecule type" value="Genomic_DNA"/>
</dbReference>
<dbReference type="RefSeq" id="WP_000663016.1">
    <property type="nucleotide sequence ID" value="NC_002952.2"/>
</dbReference>
<dbReference type="SMR" id="Q6GIR8"/>
<dbReference type="KEGG" id="sar:SAR0777"/>
<dbReference type="HOGENOM" id="CLU_017584_3_3_9"/>
<dbReference type="UniPathway" id="UPA00031">
    <property type="reaction ID" value="UER00012"/>
</dbReference>
<dbReference type="Proteomes" id="UP000000596">
    <property type="component" value="Chromosome"/>
</dbReference>
<dbReference type="GO" id="GO:0004400">
    <property type="term" value="F:histidinol-phosphate transaminase activity"/>
    <property type="evidence" value="ECO:0007669"/>
    <property type="project" value="UniProtKB-UniRule"/>
</dbReference>
<dbReference type="GO" id="GO:0030170">
    <property type="term" value="F:pyridoxal phosphate binding"/>
    <property type="evidence" value="ECO:0007669"/>
    <property type="project" value="InterPro"/>
</dbReference>
<dbReference type="GO" id="GO:0000105">
    <property type="term" value="P:L-histidine biosynthetic process"/>
    <property type="evidence" value="ECO:0007669"/>
    <property type="project" value="UniProtKB-UniRule"/>
</dbReference>
<dbReference type="CDD" id="cd00609">
    <property type="entry name" value="AAT_like"/>
    <property type="match status" value="1"/>
</dbReference>
<dbReference type="Gene3D" id="3.90.1150.10">
    <property type="entry name" value="Aspartate Aminotransferase, domain 1"/>
    <property type="match status" value="1"/>
</dbReference>
<dbReference type="Gene3D" id="3.40.640.10">
    <property type="entry name" value="Type I PLP-dependent aspartate aminotransferase-like (Major domain)"/>
    <property type="match status" value="1"/>
</dbReference>
<dbReference type="HAMAP" id="MF_01023">
    <property type="entry name" value="HisC_aminotrans_2"/>
    <property type="match status" value="1"/>
</dbReference>
<dbReference type="InterPro" id="IPR001917">
    <property type="entry name" value="Aminotrans_II_pyridoxalP_BS"/>
</dbReference>
<dbReference type="InterPro" id="IPR004839">
    <property type="entry name" value="Aminotransferase_I/II_large"/>
</dbReference>
<dbReference type="InterPro" id="IPR005861">
    <property type="entry name" value="HisP_aminotrans"/>
</dbReference>
<dbReference type="InterPro" id="IPR050106">
    <property type="entry name" value="HistidinolP_aminotransfase"/>
</dbReference>
<dbReference type="InterPro" id="IPR015424">
    <property type="entry name" value="PyrdxlP-dep_Trfase"/>
</dbReference>
<dbReference type="InterPro" id="IPR015421">
    <property type="entry name" value="PyrdxlP-dep_Trfase_major"/>
</dbReference>
<dbReference type="InterPro" id="IPR015422">
    <property type="entry name" value="PyrdxlP-dep_Trfase_small"/>
</dbReference>
<dbReference type="NCBIfam" id="TIGR01141">
    <property type="entry name" value="hisC"/>
    <property type="match status" value="1"/>
</dbReference>
<dbReference type="PANTHER" id="PTHR43643:SF3">
    <property type="entry name" value="HISTIDINOL-PHOSPHATE AMINOTRANSFERASE"/>
    <property type="match status" value="1"/>
</dbReference>
<dbReference type="PANTHER" id="PTHR43643">
    <property type="entry name" value="HISTIDINOL-PHOSPHATE AMINOTRANSFERASE 2"/>
    <property type="match status" value="1"/>
</dbReference>
<dbReference type="Pfam" id="PF00155">
    <property type="entry name" value="Aminotran_1_2"/>
    <property type="match status" value="1"/>
</dbReference>
<dbReference type="SUPFAM" id="SSF53383">
    <property type="entry name" value="PLP-dependent transferases"/>
    <property type="match status" value="1"/>
</dbReference>
<dbReference type="PROSITE" id="PS00599">
    <property type="entry name" value="AA_TRANSFER_CLASS_2"/>
    <property type="match status" value="1"/>
</dbReference>
<reference key="1">
    <citation type="journal article" date="2004" name="Proc. Natl. Acad. Sci. U.S.A.">
        <title>Complete genomes of two clinical Staphylococcus aureus strains: evidence for the rapid evolution of virulence and drug resistance.</title>
        <authorList>
            <person name="Holden M.T.G."/>
            <person name="Feil E.J."/>
            <person name="Lindsay J.A."/>
            <person name="Peacock S.J."/>
            <person name="Day N.P.J."/>
            <person name="Enright M.C."/>
            <person name="Foster T.J."/>
            <person name="Moore C.E."/>
            <person name="Hurst L."/>
            <person name="Atkin R."/>
            <person name="Barron A."/>
            <person name="Bason N."/>
            <person name="Bentley S.D."/>
            <person name="Chillingworth C."/>
            <person name="Chillingworth T."/>
            <person name="Churcher C."/>
            <person name="Clark L."/>
            <person name="Corton C."/>
            <person name="Cronin A."/>
            <person name="Doggett J."/>
            <person name="Dowd L."/>
            <person name="Feltwell T."/>
            <person name="Hance Z."/>
            <person name="Harris B."/>
            <person name="Hauser H."/>
            <person name="Holroyd S."/>
            <person name="Jagels K."/>
            <person name="James K.D."/>
            <person name="Lennard N."/>
            <person name="Line A."/>
            <person name="Mayes R."/>
            <person name="Moule S."/>
            <person name="Mungall K."/>
            <person name="Ormond D."/>
            <person name="Quail M.A."/>
            <person name="Rabbinowitsch E."/>
            <person name="Rutherford K.M."/>
            <person name="Sanders M."/>
            <person name="Sharp S."/>
            <person name="Simmonds M."/>
            <person name="Stevens K."/>
            <person name="Whitehead S."/>
            <person name="Barrell B.G."/>
            <person name="Spratt B.G."/>
            <person name="Parkhill J."/>
        </authorList>
    </citation>
    <scope>NUCLEOTIDE SEQUENCE [LARGE SCALE GENOMIC DNA]</scope>
    <source>
        <strain>MRSA252</strain>
    </source>
</reference>
<comment type="catalytic activity">
    <reaction evidence="1">
        <text>L-histidinol phosphate + 2-oxoglutarate = 3-(imidazol-4-yl)-2-oxopropyl phosphate + L-glutamate</text>
        <dbReference type="Rhea" id="RHEA:23744"/>
        <dbReference type="ChEBI" id="CHEBI:16810"/>
        <dbReference type="ChEBI" id="CHEBI:29985"/>
        <dbReference type="ChEBI" id="CHEBI:57766"/>
        <dbReference type="ChEBI" id="CHEBI:57980"/>
        <dbReference type="EC" id="2.6.1.9"/>
    </reaction>
</comment>
<comment type="cofactor">
    <cofactor evidence="1">
        <name>pyridoxal 5'-phosphate</name>
        <dbReference type="ChEBI" id="CHEBI:597326"/>
    </cofactor>
</comment>
<comment type="pathway">
    <text evidence="1">Amino-acid biosynthesis; L-histidine biosynthesis; L-histidine from 5-phospho-alpha-D-ribose 1-diphosphate: step 7/9.</text>
</comment>
<comment type="subunit">
    <text evidence="1">Homodimer.</text>
</comment>
<comment type="similarity">
    <text evidence="1">Belongs to the class-II pyridoxal-phosphate-dependent aminotransferase family. Histidinol-phosphate aminotransferase subfamily.</text>
</comment>
<protein>
    <recommendedName>
        <fullName evidence="1">Histidinol-phosphate aminotransferase</fullName>
        <ecNumber evidence="1">2.6.1.9</ecNumber>
    </recommendedName>
    <alternativeName>
        <fullName evidence="1">Imidazole acetol-phosphate transaminase</fullName>
    </alternativeName>
</protein>
<sequence length="352" mass="39666">MKEQLNQLSAYQPGLSPRALKEKYGIEGDLYKLASNENLYGPSPKVKEAISAHLDELYYYPETGSPTLKAAISKHLNVDQSRILFGAGLDEVILMISRAVLTPGDTIVTSEATFGQYYHNAIVESANVIQVPLKDGGFDLDGILKEVNDDTSLVWLCNPNNPTGTYFNHESLDSFLSQVPSHVPVLIDEAYFEFVTAEDYPDTLALQQKYDNAFLLRTFSKAYGLAGLRVGYVVASEHAIEKWNIIRPPFNVTRISEYAAVAALEDQQYLKEVTHKNSVERERFYQLPQSEHFLPSQTNFIFVKTKRVNELYEALLNVGCITRPFPTGVRITIGFKEQNGKMLEVLSNFKYE</sequence>
<name>HIS8_STAAR</name>
<keyword id="KW-0028">Amino-acid biosynthesis</keyword>
<keyword id="KW-0032">Aminotransferase</keyword>
<keyword id="KW-0368">Histidine biosynthesis</keyword>
<keyword id="KW-0663">Pyridoxal phosphate</keyword>
<keyword id="KW-0808">Transferase</keyword>
<accession>Q6GIR8</accession>
<organism>
    <name type="scientific">Staphylococcus aureus (strain MRSA252)</name>
    <dbReference type="NCBI Taxonomy" id="282458"/>
    <lineage>
        <taxon>Bacteria</taxon>
        <taxon>Bacillati</taxon>
        <taxon>Bacillota</taxon>
        <taxon>Bacilli</taxon>
        <taxon>Bacillales</taxon>
        <taxon>Staphylococcaceae</taxon>
        <taxon>Staphylococcus</taxon>
    </lineage>
</organism>
<feature type="chain" id="PRO_0000153452" description="Histidinol-phosphate aminotransferase">
    <location>
        <begin position="1"/>
        <end position="352"/>
    </location>
</feature>
<feature type="modified residue" description="N6-(pyridoxal phosphate)lysine" evidence="1">
    <location>
        <position position="221"/>
    </location>
</feature>
<proteinExistence type="inferred from homology"/>